<organismHost>
    <name type="scientific">Chlorella</name>
    <dbReference type="NCBI Taxonomy" id="3071"/>
</organismHost>
<accession>O41043</accession>
<sequence length="649" mass="71004">MADVEVPINVITEINNLNELNNVNTGNEASGGISRWLIYTIIVLVVAAVVGLVIFIVKKVNNKKRESGQIIQEVSQVLTENVDKKVANDLLDVALRARTEQAQLEANSATSVQLAAVGKISQSDADMAIKSAADAKIKAEQANIEAAKAIENIRKQELDNANKAVAMATTAAAAISATYQDKSKDIIDNKLREAEETYKQVVQQRQLAEKEYNASLATRRQAERNVYNKKVTEANETIKSVKKTEDVLKVLDDKIKQAKKATDDFKKKKQADKNKPPASKPSPGPKPAPKPSPGPKPAPKPSPGPKPSPGPSACPQFQTRDSKGQCVCDPRQGVTWDGKSCVCDMKNGWNWDGKKCVKGACPQFQTRDSKGQCVCDPKQGVTWDGKGCVCDMKNGWNWDGKKCVKSGGGGGGGNVSGTITLMSNEETAVLNKGTYPGQGGKRYNRQWNVPGNMSDSCLLEFDIFFPSNFWFGCQGKIGGFFLSRPGQRGVASGCAKPGKRTGASYRVMWGGTTYKNGKRVGRDGSGVYPYLYFDDSTNSKQIPKLKQVEDCGHSIMVEEFSRSIKRNAWNNIKIGLKLNTIGQRNGLIYFEVNGQKQTQDQVMWTSSSDFNIKYVIFGTFYGGCTGQNINQIPNTFVKYKNVKISKWSP</sequence>
<protein>
    <recommendedName>
        <fullName>Exolysin</fullName>
        <ecNumber evidence="3">4.2.2.-</ecNumber>
    </recommendedName>
</protein>
<proteinExistence type="evidence at protein level"/>
<name>EXLYS_PBCV1</name>
<dbReference type="EC" id="4.2.2.-" evidence="3"/>
<dbReference type="EMBL" id="JF411744">
    <property type="protein sequence ID" value="AAC96919.1"/>
    <property type="molecule type" value="Genomic_DNA"/>
</dbReference>
<dbReference type="PIR" id="T18063">
    <property type="entry name" value="T18063"/>
</dbReference>
<dbReference type="RefSeq" id="NP_048917.1">
    <property type="nucleotide sequence ID" value="NC_000852.5"/>
</dbReference>
<dbReference type="SMR" id="O41043"/>
<dbReference type="CAZy" id="PL14">
    <property type="family name" value="Polysaccharide Lyase Family 14"/>
</dbReference>
<dbReference type="GeneID" id="917870"/>
<dbReference type="KEGG" id="vg:917870"/>
<dbReference type="OrthoDB" id="3379at10239"/>
<dbReference type="Proteomes" id="UP000000862">
    <property type="component" value="Genome"/>
</dbReference>
<dbReference type="GO" id="GO:0016020">
    <property type="term" value="C:membrane"/>
    <property type="evidence" value="ECO:0007669"/>
    <property type="project" value="UniProtKB-SubCell"/>
</dbReference>
<dbReference type="GO" id="GO:0044423">
    <property type="term" value="C:virion component"/>
    <property type="evidence" value="ECO:0007669"/>
    <property type="project" value="UniProtKB-KW"/>
</dbReference>
<dbReference type="GO" id="GO:0016829">
    <property type="term" value="F:lyase activity"/>
    <property type="evidence" value="ECO:0007669"/>
    <property type="project" value="UniProtKB-KW"/>
</dbReference>
<dbReference type="GO" id="GO:0098994">
    <property type="term" value="P:symbiont entry into host cell via disruption of host cell envelope"/>
    <property type="evidence" value="ECO:0007669"/>
    <property type="project" value="UniProtKB-KW"/>
</dbReference>
<dbReference type="Gene3D" id="2.60.120.200">
    <property type="match status" value="1"/>
</dbReference>
<dbReference type="InterPro" id="IPR043659">
    <property type="entry name" value="Exolysin_DUF5874"/>
</dbReference>
<dbReference type="InterPro" id="IPR048958">
    <property type="entry name" value="Polysacc_lyase_14"/>
</dbReference>
<dbReference type="PANTHER" id="PTHR40124">
    <property type="match status" value="1"/>
</dbReference>
<dbReference type="PANTHER" id="PTHR40124:SF1">
    <property type="entry name" value="DISAGGREGATASE RELATED REPEAT PROTEIN"/>
    <property type="match status" value="1"/>
</dbReference>
<dbReference type="Pfam" id="PF19202">
    <property type="entry name" value="DUF5874"/>
    <property type="match status" value="2"/>
</dbReference>
<dbReference type="Pfam" id="PF21294">
    <property type="entry name" value="Polysacc_lyase_14"/>
    <property type="match status" value="1"/>
</dbReference>
<feature type="chain" id="PRO_0000460622" description="Exolysin">
    <location>
        <begin position="1"/>
        <end position="649"/>
    </location>
</feature>
<feature type="transmembrane region" description="Helical" evidence="1">
    <location>
        <begin position="37"/>
        <end position="57"/>
    </location>
</feature>
<feature type="region of interest" description="Disordered" evidence="2">
    <location>
        <begin position="258"/>
        <end position="325"/>
    </location>
</feature>
<feature type="region of interest" description="Catalytic" evidence="3">
    <location>
        <begin position="407"/>
        <end position="649"/>
    </location>
</feature>
<feature type="coiled-coil region" evidence="1">
    <location>
        <begin position="184"/>
        <end position="268"/>
    </location>
</feature>
<feature type="compositionally biased region" description="Basic and acidic residues" evidence="2">
    <location>
        <begin position="258"/>
        <end position="275"/>
    </location>
</feature>
<feature type="compositionally biased region" description="Pro residues" evidence="2">
    <location>
        <begin position="278"/>
        <end position="312"/>
    </location>
</feature>
<comment type="function">
    <text evidence="3">During viral entry, involved in the degradation of the host cell wall at the site of attachment.</text>
</comment>
<comment type="cofactor">
    <cofactor evidence="3">
        <name>Ca(2+)</name>
        <dbReference type="ChEBI" id="CHEBI:29108"/>
    </cofactor>
    <cofactor evidence="3">
        <name>Mg(2+)</name>
        <dbReference type="ChEBI" id="CHEBI:18420"/>
    </cofactor>
</comment>
<comment type="activity regulation">
    <text evidence="3">Inhibited by Mn(2+), Cu(2+), Co(2+), Fe(2+), Zn(2+), Ni(2+), EDTA and EGTA.</text>
</comment>
<comment type="subcellular location">
    <subcellularLocation>
        <location evidence="1">Membrane</location>
        <topology evidence="1">Single-pass membrane protein</topology>
    </subcellularLocation>
    <subcellularLocation>
        <location evidence="3">Virion</location>
    </subcellularLocation>
</comment>
<comment type="domain">
    <text evidence="3">The C-terminus displays the cell wall degrading activity.</text>
</comment>
<evidence type="ECO:0000255" key="1"/>
<evidence type="ECO:0000256" key="2">
    <source>
        <dbReference type="SAM" id="MobiDB-lite"/>
    </source>
</evidence>
<evidence type="ECO:0000269" key="3">
    <source>
    </source>
</evidence>
<evidence type="ECO:0000312" key="4">
    <source>
        <dbReference type="EMBL" id="AAC96919.1"/>
    </source>
</evidence>
<gene>
    <name evidence="4" type="primary">A561L</name>
</gene>
<organism>
    <name type="scientific">Paramecium bursaria Chlorella virus 1</name>
    <name type="common">PBCV-1</name>
    <dbReference type="NCBI Taxonomy" id="10506"/>
    <lineage>
        <taxon>Viruses</taxon>
        <taxon>Varidnaviria</taxon>
        <taxon>Bamfordvirae</taxon>
        <taxon>Nucleocytoviricota</taxon>
        <taxon>Megaviricetes</taxon>
        <taxon>Algavirales</taxon>
        <taxon>Phycodnaviridae</taxon>
        <taxon>Chlorovirus</taxon>
    </lineage>
</organism>
<keyword id="KW-0175">Coiled coil</keyword>
<keyword id="KW-1235">Degradation of host cell envelope components during virus entry</keyword>
<keyword id="KW-0456">Lyase</keyword>
<keyword id="KW-0472">Membrane</keyword>
<keyword id="KW-1185">Reference proteome</keyword>
<keyword id="KW-0812">Transmembrane</keyword>
<keyword id="KW-1133">Transmembrane helix</keyword>
<keyword id="KW-0946">Virion</keyword>
<keyword id="KW-1160">Virus entry into host cell</keyword>
<reference key="1">
    <citation type="journal article" date="1997" name="Virology">
        <title>Analysis of 74 kb of DNA located at the right end of the 330-kb chlorella virus PBCV-1 genome.</title>
        <authorList>
            <person name="Li Y."/>
            <person name="Lu Z."/>
            <person name="Sun L."/>
            <person name="Ropp S."/>
            <person name="Kutish G.F."/>
            <person name="Rock D.L."/>
            <person name="van Etten J.L."/>
        </authorList>
    </citation>
    <scope>NUCLEOTIDE SEQUENCE [GENOMIC DNA]</scope>
</reference>
<reference key="2">
    <citation type="journal article" date="2021" name="Viruses">
        <title>Identification of a Chlorovirus PBCV-1 Protein Involved in Degrading the Host Cell Wall during Virus Infection.</title>
        <authorList>
            <person name="Agarkova I.V."/>
            <person name="Lane L.C."/>
            <person name="Dunigan D.D."/>
            <person name="Quispe C.F."/>
            <person name="Duncan G.A."/>
            <person name="Milrot E."/>
            <person name="Minsky A."/>
            <person name="Esmael A."/>
            <person name="Ghosh J.S."/>
            <person name="Van Etten J.L."/>
        </authorList>
    </citation>
    <scope>FUNCTION</scope>
    <scope>CATALYTIC ACTIVITY</scope>
    <scope>DOMAIN</scope>
    <scope>ACTIVITY REGULATION</scope>
    <scope>COFACTOR</scope>
    <scope>SUBCELLULAR LOCATION</scope>
</reference>